<protein>
    <recommendedName>
        <fullName>Ubiquinone biosynthesis protein COQ9-B, mitochondrial</fullName>
    </recommendedName>
</protein>
<comment type="function">
    <text evidence="1">Membrane-associated protein that warps the membrane surface to access and bind aromatic isoprenes with high specificity, including ubiquinone (CoQ) isoprene intermediates and presents them directly to COQ7, therefore facilitating the COQ7-mediated hydroxylase step. Participates in the biosynthesis of coenzyme Q, also named ubiquinone, an essential lipid-soluble electron transporter for aerobic cellular respiration.</text>
</comment>
<comment type="pathway">
    <text evidence="2">Cofactor biosynthesis; ubiquinone biosynthesis.</text>
</comment>
<comment type="subunit">
    <text evidence="1">Homodimer. Heterodimer; two heterodimers of COQ7:COQ9 come together on the same side of the lipid pseudo-bilayer and form a curved tetramer with a hydrophobic surface suitable for membrane interaction. These two tetramers assemble into a soluble octamer with a pseudo-bilayer of lipids captured within. Interacts with COQ7; this interaction allows ubiquinone (CoQ) isoprene intermediates presentation to COQ7 and facilitates the COQ7-mediated hydroxylase step.</text>
</comment>
<comment type="subcellular location">
    <subcellularLocation>
        <location evidence="2">Mitochondrion</location>
    </subcellularLocation>
    <text evidence="1">Associates with cardiolipin-rich membranes which leads to the lipid bilayer deformation and then accessing to membrane-bound lipids.</text>
</comment>
<comment type="domain">
    <text evidence="1">Structurally similar to the bacterial FadR protein (fatty acid metabolism regulator protein).</text>
</comment>
<comment type="similarity">
    <text evidence="5">Belongs to the COQ9 family.</text>
</comment>
<proteinExistence type="evidence at transcript level"/>
<organism>
    <name type="scientific">Xenopus laevis</name>
    <name type="common">African clawed frog</name>
    <dbReference type="NCBI Taxonomy" id="8355"/>
    <lineage>
        <taxon>Eukaryota</taxon>
        <taxon>Metazoa</taxon>
        <taxon>Chordata</taxon>
        <taxon>Craniata</taxon>
        <taxon>Vertebrata</taxon>
        <taxon>Euteleostomi</taxon>
        <taxon>Amphibia</taxon>
        <taxon>Batrachia</taxon>
        <taxon>Anura</taxon>
        <taxon>Pipoidea</taxon>
        <taxon>Pipidae</taxon>
        <taxon>Xenopodinae</taxon>
        <taxon>Xenopus</taxon>
        <taxon>Xenopus</taxon>
    </lineage>
</organism>
<evidence type="ECO:0000250" key="1">
    <source>
        <dbReference type="UniProtKB" id="O75208"/>
    </source>
</evidence>
<evidence type="ECO:0000250" key="2">
    <source>
        <dbReference type="UniProtKB" id="Q8K1Z0"/>
    </source>
</evidence>
<evidence type="ECO:0000255" key="3"/>
<evidence type="ECO:0000256" key="4">
    <source>
        <dbReference type="SAM" id="MobiDB-lite"/>
    </source>
</evidence>
<evidence type="ECO:0000305" key="5"/>
<gene>
    <name type="primary">coq9-b</name>
</gene>
<reference key="1">
    <citation type="submission" date="2004-12" db="EMBL/GenBank/DDBJ databases">
        <authorList>
            <consortium name="NIH - Xenopus Gene Collection (XGC) project"/>
        </authorList>
    </citation>
    <scope>NUCLEOTIDE SEQUENCE [LARGE SCALE MRNA]</scope>
    <source>
        <tissue>Testis</tissue>
    </source>
</reference>
<name>COQ9B_XENLA</name>
<keyword id="KW-0446">Lipid-binding</keyword>
<keyword id="KW-0496">Mitochondrion</keyword>
<keyword id="KW-1185">Reference proteome</keyword>
<keyword id="KW-0809">Transit peptide</keyword>
<keyword id="KW-0831">Ubiquinone biosynthesis</keyword>
<sequence length="293" mass="32805">MLVLTQPFLLMPRKLWVSSALRSDDQKQPPFSSSSTHAETPEHAEEQYQQQQSPPRYTDQAGEESEDYESEEQLQQRILTAALQFVPDFGWSADAIAEGAKSLDMSAAAGGMFEDGGSELVLHFVTQCNLQLTELLEKEHKLVQLGTSEKKPTAQFLRDAVKARLRMHIPYIEQWPQALGMLLLPRNIPSSLKLLSAMVDDMWHYAGDQSTDVSWYTSRAVLTGIYNSTELVMLQDSSPDFEDTWKFLENRISEAMTMGNSMKQVASTGEAVIQGLMGAAVTLKNLTGLNQRR</sequence>
<accession>Q5PPX7</accession>
<dbReference type="EMBL" id="BC087448">
    <property type="protein sequence ID" value="AAH87448.1"/>
    <property type="molecule type" value="mRNA"/>
</dbReference>
<dbReference type="RefSeq" id="NP_001088784.1">
    <property type="nucleotide sequence ID" value="NM_001095315.1"/>
</dbReference>
<dbReference type="SMR" id="Q5PPX7"/>
<dbReference type="DNASU" id="496049"/>
<dbReference type="GeneID" id="496049"/>
<dbReference type="KEGG" id="xla:496049"/>
<dbReference type="AGR" id="Xenbase:XB-GENE-6252821"/>
<dbReference type="CTD" id="496049"/>
<dbReference type="Xenbase" id="XB-GENE-6252821">
    <property type="gene designation" value="coq9.S"/>
</dbReference>
<dbReference type="OrthoDB" id="619536at2759"/>
<dbReference type="UniPathway" id="UPA00232"/>
<dbReference type="Proteomes" id="UP000186698">
    <property type="component" value="Chromosome 4S"/>
</dbReference>
<dbReference type="Bgee" id="496049">
    <property type="expression patterns" value="Expressed in muscle tissue and 20 other cell types or tissues"/>
</dbReference>
<dbReference type="GO" id="GO:0005743">
    <property type="term" value="C:mitochondrial inner membrane"/>
    <property type="evidence" value="ECO:0000318"/>
    <property type="project" value="GO_Central"/>
</dbReference>
<dbReference type="GO" id="GO:0019840">
    <property type="term" value="F:isoprenoid binding"/>
    <property type="evidence" value="ECO:0000250"/>
    <property type="project" value="UniProtKB"/>
</dbReference>
<dbReference type="GO" id="GO:0008289">
    <property type="term" value="F:lipid binding"/>
    <property type="evidence" value="ECO:0000250"/>
    <property type="project" value="UniProtKB"/>
</dbReference>
<dbReference type="GO" id="GO:0042803">
    <property type="term" value="F:protein homodimerization activity"/>
    <property type="evidence" value="ECO:0000250"/>
    <property type="project" value="UniProtKB"/>
</dbReference>
<dbReference type="GO" id="GO:0006744">
    <property type="term" value="P:ubiquinone biosynthetic process"/>
    <property type="evidence" value="ECO:0000250"/>
    <property type="project" value="UniProtKB"/>
</dbReference>
<dbReference type="FunFam" id="1.10.357.10:FF:000004">
    <property type="entry name" value="Ubiquinone biosynthesis protein COQ9, mitochondrial"/>
    <property type="match status" value="1"/>
</dbReference>
<dbReference type="Gene3D" id="1.10.357.10">
    <property type="entry name" value="Tetracycline Repressor, domain 2"/>
    <property type="match status" value="1"/>
</dbReference>
<dbReference type="InterPro" id="IPR013718">
    <property type="entry name" value="COQ9_C"/>
</dbReference>
<dbReference type="InterPro" id="IPR048674">
    <property type="entry name" value="COQ9_HTH"/>
</dbReference>
<dbReference type="InterPro" id="IPR012762">
    <property type="entry name" value="Ubiq_biosynth_COQ9"/>
</dbReference>
<dbReference type="NCBIfam" id="TIGR02396">
    <property type="entry name" value="diverge_rpsU"/>
    <property type="match status" value="1"/>
</dbReference>
<dbReference type="PANTHER" id="PTHR21427">
    <property type="entry name" value="UBIQUINONE BIOSYNTHESIS PROTEIN COQ9, MITOCHONDRIAL"/>
    <property type="match status" value="1"/>
</dbReference>
<dbReference type="PANTHER" id="PTHR21427:SF19">
    <property type="entry name" value="UBIQUINONE BIOSYNTHESIS PROTEIN COQ9, MITOCHONDRIAL"/>
    <property type="match status" value="1"/>
</dbReference>
<dbReference type="Pfam" id="PF08511">
    <property type="entry name" value="COQ9"/>
    <property type="match status" value="1"/>
</dbReference>
<dbReference type="Pfam" id="PF21392">
    <property type="entry name" value="COQ9_N"/>
    <property type="match status" value="1"/>
</dbReference>
<feature type="transit peptide" description="Mitochondrion" evidence="3">
    <location>
        <begin position="1"/>
        <end status="unknown"/>
    </location>
</feature>
<feature type="chain" id="PRO_0000228641" description="Ubiquinone biosynthesis protein COQ9-B, mitochondrial">
    <location>
        <begin status="unknown"/>
        <end position="293"/>
    </location>
</feature>
<feature type="region of interest" description="Disordered" evidence="4">
    <location>
        <begin position="21"/>
        <end position="73"/>
    </location>
</feature>
<feature type="compositionally biased region" description="Polar residues" evidence="4">
    <location>
        <begin position="29"/>
        <end position="38"/>
    </location>
</feature>
<feature type="compositionally biased region" description="Acidic residues" evidence="4">
    <location>
        <begin position="61"/>
        <end position="72"/>
    </location>
</feature>
<feature type="binding site" evidence="1">
    <location>
        <position position="219"/>
    </location>
    <ligand>
        <name>a 1,2-diacylglycero-3-phosphoethanolamine</name>
        <dbReference type="ChEBI" id="CHEBI:57613"/>
    </ligand>
</feature>